<feature type="chain" id="PRO_0000087987" description="DNA methyltransferase CcrM">
    <location>
        <begin position="1"/>
        <end position="358"/>
    </location>
</feature>
<feature type="domain" description="RAMA" evidence="2">
    <location>
        <begin position="259"/>
        <end position="355"/>
    </location>
</feature>
<feature type="DNA-binding region" description="Target strand DNA" evidence="3 8">
    <location>
        <begin position="31"/>
        <end position="34"/>
    </location>
</feature>
<feature type="DNA-binding region" description="Target strand DNA" evidence="3 8">
    <location>
        <begin position="39"/>
        <end position="45"/>
    </location>
</feature>
<feature type="DNA-binding region" description="Non-target strand DNA" evidence="3 8">
    <location>
        <begin position="93"/>
        <end position="94"/>
    </location>
</feature>
<feature type="DNA-binding region" description="Non-target strand DNA" evidence="3 8">
    <location>
        <begin position="109"/>
        <end position="110"/>
    </location>
</feature>
<feature type="DNA-binding region" description="Target strand DNA" evidence="3 8">
    <location>
        <begin position="122"/>
        <end position="132"/>
    </location>
</feature>
<feature type="DNA-binding region" description="Non-target strand DNA" evidence="3 8">
    <location>
        <begin position="153"/>
        <end position="157"/>
    </location>
</feature>
<feature type="DNA-binding region" description="Target strand DNA" evidence="3 8">
    <location>
        <begin position="187"/>
        <end position="193"/>
    </location>
</feature>
<feature type="DNA-binding region" description="Non-target strand DNA" evidence="3 8">
    <location>
        <begin position="315"/>
        <end position="317"/>
    </location>
</feature>
<feature type="DNA-binding region" description="Non-target strand DNA" evidence="3 8">
    <location>
        <begin position="330"/>
        <end position="332"/>
    </location>
</feature>
<feature type="region of interest" description="Methyltransferase" evidence="7">
    <location>
        <begin position="1"/>
        <end position="260"/>
    </location>
</feature>
<feature type="region of interest" description="Linker" evidence="7">
    <location>
        <begin position="261"/>
        <end position="270"/>
    </location>
</feature>
<feature type="region of interest" description="Non-specific DNA-binding" evidence="7">
    <location>
        <begin position="272"/>
        <end position="358"/>
    </location>
</feature>
<feature type="binding site" evidence="3 8">
    <location>
        <position position="94"/>
    </location>
    <ligand>
        <name>dsDNA</name>
        <dbReference type="ChEBI" id="CHEBI:4705"/>
    </ligand>
</feature>
<feature type="binding site" evidence="3 8">
    <location>
        <position position="164"/>
    </location>
    <ligand>
        <name>dsDNA</name>
        <dbReference type="ChEBI" id="CHEBI:4705"/>
    </ligand>
</feature>
<feature type="binding site" evidence="3 8">
    <location>
        <position position="179"/>
    </location>
    <ligand>
        <name>dsDNA</name>
        <dbReference type="ChEBI" id="CHEBI:4705"/>
    </ligand>
</feature>
<feature type="binding site" evidence="3 8">
    <location>
        <position position="267"/>
    </location>
    <ligand>
        <name>dsDNA</name>
        <dbReference type="ChEBI" id="CHEBI:4705"/>
    </ligand>
</feature>
<feature type="binding site" evidence="3 8">
    <location>
        <position position="272"/>
    </location>
    <ligand>
        <name>dsDNA</name>
        <dbReference type="ChEBI" id="CHEBI:4705"/>
    </ligand>
</feature>
<feature type="binding site" evidence="3 8">
    <location>
        <position position="350"/>
    </location>
    <ligand>
        <name>dsDNA</name>
        <dbReference type="ChEBI" id="CHEBI:4705"/>
    </ligand>
</feature>
<feature type="strand" evidence="9">
    <location>
        <begin position="5"/>
        <end position="11"/>
    </location>
</feature>
<feature type="helix" evidence="9">
    <location>
        <begin position="13"/>
        <end position="19"/>
    </location>
</feature>
<feature type="strand" evidence="9">
    <location>
        <begin position="25"/>
        <end position="30"/>
    </location>
</feature>
<feature type="helix" evidence="9">
    <location>
        <begin position="56"/>
        <end position="58"/>
    </location>
</feature>
<feature type="helix" evidence="9">
    <location>
        <begin position="63"/>
        <end position="80"/>
    </location>
</feature>
<feature type="strand" evidence="9">
    <location>
        <begin position="81"/>
        <end position="91"/>
    </location>
</feature>
<feature type="turn" evidence="9">
    <location>
        <begin position="93"/>
        <end position="95"/>
    </location>
</feature>
<feature type="helix" evidence="9">
    <location>
        <begin position="96"/>
        <end position="105"/>
    </location>
</feature>
<feature type="strand" evidence="9">
    <location>
        <begin position="109"/>
        <end position="120"/>
    </location>
</feature>
<feature type="strand" evidence="9">
    <location>
        <begin position="125"/>
        <end position="129"/>
    </location>
</feature>
<feature type="strand" evidence="9">
    <location>
        <begin position="134"/>
        <end position="142"/>
    </location>
</feature>
<feature type="turn" evidence="9">
    <location>
        <begin position="153"/>
        <end position="157"/>
    </location>
</feature>
<feature type="turn" evidence="9">
    <location>
        <begin position="162"/>
        <end position="164"/>
    </location>
</feature>
<feature type="strand" evidence="9">
    <location>
        <begin position="165"/>
        <end position="171"/>
    </location>
</feature>
<feature type="helix" evidence="9">
    <location>
        <begin position="176"/>
        <end position="178"/>
    </location>
</feature>
<feature type="strand" evidence="9">
    <location>
        <begin position="185"/>
        <end position="188"/>
    </location>
</feature>
<feature type="helix" evidence="9">
    <location>
        <begin position="195"/>
        <end position="205"/>
    </location>
</feature>
<feature type="strand" evidence="9">
    <location>
        <begin position="211"/>
        <end position="216"/>
    </location>
</feature>
<feature type="turn" evidence="9">
    <location>
        <begin position="218"/>
        <end position="220"/>
    </location>
</feature>
<feature type="helix" evidence="9">
    <location>
        <begin position="221"/>
        <end position="228"/>
    </location>
</feature>
<feature type="strand" evidence="9">
    <location>
        <begin position="232"/>
        <end position="238"/>
    </location>
</feature>
<feature type="helix" evidence="9">
    <location>
        <begin position="240"/>
        <end position="251"/>
    </location>
</feature>
<feature type="helix" evidence="9">
    <location>
        <begin position="275"/>
        <end position="280"/>
    </location>
</feature>
<feature type="strand" evidence="9">
    <location>
        <begin position="289"/>
        <end position="291"/>
    </location>
</feature>
<feature type="strand" evidence="9">
    <location>
        <begin position="293"/>
        <end position="296"/>
    </location>
</feature>
<feature type="strand" evidence="9">
    <location>
        <begin position="298"/>
        <end position="301"/>
    </location>
</feature>
<feature type="strand" evidence="9">
    <location>
        <begin position="307"/>
        <end position="309"/>
    </location>
</feature>
<feature type="strand" evidence="9">
    <location>
        <begin position="312"/>
        <end position="314"/>
    </location>
</feature>
<feature type="helix" evidence="9">
    <location>
        <begin position="316"/>
        <end position="322"/>
    </location>
</feature>
<feature type="turn" evidence="9">
    <location>
        <begin position="323"/>
        <end position="325"/>
    </location>
</feature>
<feature type="helix" evidence="9">
    <location>
        <begin position="331"/>
        <end position="334"/>
    </location>
</feature>
<feature type="strand" evidence="9">
    <location>
        <begin position="336"/>
        <end position="338"/>
    </location>
</feature>
<feature type="strand" evidence="9">
    <location>
        <begin position="340"/>
        <end position="345"/>
    </location>
</feature>
<feature type="helix" evidence="9">
    <location>
        <begin position="347"/>
        <end position="356"/>
    </location>
</feature>
<comment type="function">
    <text evidence="1 3 4 7">A beta subtype methylase that recognizes the double-stranded sequence 5'-GANTC-3' and methylates non-modifed A-2 on the hemimethylated, post-replicative DNA (Probable) (PubMed:12654995) (By similarity). Opens a bubble in the DNA at the recognition site, allowing precise recognition of the sequence and ensuring enzyme specificity (PubMed:31601797). Functions only in the predivisional cell. Responsible for 5'-GANTC-3' methylation in the cell; methylation of hemimethylated sites generated after replication fork passage occurs late in the predivisional cell, near completion of chromosome replication but prior to cell division. Contributes to the accurate cell-cycle control of DNA replication and cellular morphology (By similarity).</text>
</comment>
<comment type="catalytic activity">
    <reaction>
        <text>a 2'-deoxyadenosine in DNA + S-adenosyl-L-methionine = an N(6)-methyl-2'-deoxyadenosine in DNA + S-adenosyl-L-homocysteine + H(+)</text>
        <dbReference type="Rhea" id="RHEA:15197"/>
        <dbReference type="Rhea" id="RHEA-COMP:12418"/>
        <dbReference type="Rhea" id="RHEA-COMP:12419"/>
        <dbReference type="ChEBI" id="CHEBI:15378"/>
        <dbReference type="ChEBI" id="CHEBI:57856"/>
        <dbReference type="ChEBI" id="CHEBI:59789"/>
        <dbReference type="ChEBI" id="CHEBI:90615"/>
        <dbReference type="ChEBI" id="CHEBI:90616"/>
        <dbReference type="EC" id="2.1.1.72"/>
    </reaction>
</comment>
<comment type="subunit">
    <text evidence="3">Homodimer.</text>
</comment>
<comment type="developmental stage">
    <text evidence="1">Only expressed in predivisional cells, protein levels drop precipitously prior to cell division.</text>
</comment>
<comment type="induction">
    <text evidence="1">Transcribed from 80 minutes in synchronized cells.</text>
</comment>
<comment type="domain">
    <text evidence="3">Has an N-terminal methyltransferase (MTase) domain linked to a C-terminal DNA-binding domain by a 10 residue linker. The MTase of one monomer recognizes, binds and modifies the target strand while C-terminal domain of the other monomer binds the non-target strand.</text>
</comment>
<comment type="PTM">
    <text evidence="1">Rapidly degraded by Lon protease prior to cell division.</text>
</comment>
<comment type="similarity">
    <text evidence="6">Belongs to the N(4)/N(6)-methyltransferase family.</text>
</comment>
<name>CCRM_CAUVC</name>
<accession>P0CAW2</accession>
<accession>Q45971</accession>
<proteinExistence type="evidence at protein level"/>
<evidence type="ECO:0000250" key="1">
    <source>
        <dbReference type="UniProtKB" id="B8GZ33"/>
    </source>
</evidence>
<evidence type="ECO:0000255" key="2"/>
<evidence type="ECO:0000269" key="3">
    <source>
    </source>
</evidence>
<evidence type="ECO:0000303" key="4">
    <source>
    </source>
</evidence>
<evidence type="ECO:0000303" key="5">
    <source>
    </source>
</evidence>
<evidence type="ECO:0000305" key="6"/>
<evidence type="ECO:0000305" key="7">
    <source>
    </source>
</evidence>
<evidence type="ECO:0007744" key="8">
    <source>
        <dbReference type="PDB" id="6PBD"/>
    </source>
</evidence>
<evidence type="ECO:0007829" key="9">
    <source>
        <dbReference type="PDB" id="6PBD"/>
    </source>
</evidence>
<gene>
    <name type="primary">ccrMIM</name>
    <name evidence="5" type="synonym">ccrM</name>
    <name type="ordered locus">CC_0378</name>
</gene>
<keyword id="KW-0002">3D-structure</keyword>
<keyword id="KW-0235">DNA replication</keyword>
<keyword id="KW-0238">DNA-binding</keyword>
<keyword id="KW-0489">Methyltransferase</keyword>
<keyword id="KW-1185">Reference proteome</keyword>
<keyword id="KW-0949">S-adenosyl-L-methionine</keyword>
<keyword id="KW-0808">Transferase</keyword>
<sequence>MKFGPETIIHGDCIEQMNALPEKSVDLIFADPPYNLQLGGDLLRPDNSKVDAVDDHWDQFESFAAYDKFTREWLKAARRVLKDDGAIWVIGSYHNIFRVGVAVQDLGFWILNDIVWRKSNPMPNFKGTRFANAHETLIWASKSQNAKRYTFNYDALKMANDEVQMRSDWTIPLCTGEERIKGADGQKAHPTQKPEALLYRVILSTTKPGDVILDPFFGVGTTGAAAKRLGRKFIGIEREAEYLEHAKARIAKVVPIAPEDLDVMGSKRAEPRVPFGTIVEAGLLSPGDTLYCSKGTHVAKVRPDGSITVGDLSGSIHKIGALVQSAPACNGWTYWHFKTDAGLAPIDVLRAQVRAGMN</sequence>
<protein>
    <recommendedName>
        <fullName evidence="1">DNA methyltransferase CcrM</fullName>
        <shortName evidence="4">M.CcrMI</shortName>
        <ecNumber>2.1.1.72</ecNumber>
    </recommendedName>
    <alternativeName>
        <fullName evidence="5">DNA adenine methyltransferase CcrM</fullName>
    </alternativeName>
    <alternativeName>
        <fullName evidence="4">Type II methyltransferase M.CcrMI</fullName>
    </alternativeName>
</protein>
<reference key="1">
    <citation type="journal article" date="2001" name="Proc. Natl. Acad. Sci. U.S.A.">
        <title>Complete genome sequence of Caulobacter crescentus.</title>
        <authorList>
            <person name="Nierman W.C."/>
            <person name="Feldblyum T.V."/>
            <person name="Laub M.T."/>
            <person name="Paulsen I.T."/>
            <person name="Nelson K.E."/>
            <person name="Eisen J.A."/>
            <person name="Heidelberg J.F."/>
            <person name="Alley M.R.K."/>
            <person name="Ohta N."/>
            <person name="Maddock J.R."/>
            <person name="Potocka I."/>
            <person name="Nelson W.C."/>
            <person name="Newton A."/>
            <person name="Stephens C."/>
            <person name="Phadke N.D."/>
            <person name="Ely B."/>
            <person name="DeBoy R.T."/>
            <person name="Dodson R.J."/>
            <person name="Durkin A.S."/>
            <person name="Gwinn M.L."/>
            <person name="Haft D.H."/>
            <person name="Kolonay J.F."/>
            <person name="Smit J."/>
            <person name="Craven M.B."/>
            <person name="Khouri H.M."/>
            <person name="Shetty J."/>
            <person name="Berry K.J."/>
            <person name="Utterback T.R."/>
            <person name="Tran K."/>
            <person name="Wolf A.M."/>
            <person name="Vamathevan J.J."/>
            <person name="Ermolaeva M.D."/>
            <person name="White O."/>
            <person name="Salzberg S.L."/>
            <person name="Venter J.C."/>
            <person name="Shapiro L."/>
            <person name="Fraser C.M."/>
        </authorList>
    </citation>
    <scope>NUCLEOTIDE SEQUENCE [LARGE SCALE GENOMIC DNA]</scope>
    <source>
        <strain>ATCC 19089 / CIP 103742 / CB 15</strain>
    </source>
</reference>
<reference key="2">
    <citation type="journal article" date="2003" name="Nucleic Acids Res.">
        <title>A nomenclature for restriction enzymes, DNA methyltransferases, homing endonucleases and their genes.</title>
        <authorList>
            <person name="Roberts R.J."/>
            <person name="Belfort M."/>
            <person name="Bestor T."/>
            <person name="Bhagwat A.S."/>
            <person name="Bickle T.A."/>
            <person name="Bitinaite J."/>
            <person name="Blumenthal R.M."/>
            <person name="Degtyarev S.K."/>
            <person name="Dryden D.T."/>
            <person name="Dybvig K."/>
            <person name="Firman K."/>
            <person name="Gromova E.S."/>
            <person name="Gumport R.I."/>
            <person name="Halford S.E."/>
            <person name="Hattman S."/>
            <person name="Heitman J."/>
            <person name="Hornby D.P."/>
            <person name="Janulaitis A."/>
            <person name="Jeltsch A."/>
            <person name="Josephsen J."/>
            <person name="Kiss A."/>
            <person name="Klaenhammer T.R."/>
            <person name="Kobayashi I."/>
            <person name="Kong H."/>
            <person name="Krueger D.H."/>
            <person name="Lacks S."/>
            <person name="Marinus M.G."/>
            <person name="Miyahara M."/>
            <person name="Morgan R.D."/>
            <person name="Murray N.E."/>
            <person name="Nagaraja V."/>
            <person name="Piekarowicz A."/>
            <person name="Pingoud A."/>
            <person name="Raleigh E."/>
            <person name="Rao D.N."/>
            <person name="Reich N."/>
            <person name="Repin V.E."/>
            <person name="Selker E.U."/>
            <person name="Shaw P.C."/>
            <person name="Stein D.C."/>
            <person name="Stoddard B.L."/>
            <person name="Szybalski W."/>
            <person name="Trautner T.A."/>
            <person name="Van Etten J.L."/>
            <person name="Vitor J.M."/>
            <person name="Wilson G.G."/>
            <person name="Xu S.Y."/>
        </authorList>
    </citation>
    <scope>NOMENCLATURE</scope>
    <scope>SUBTYPE</scope>
</reference>
<reference evidence="8" key="3">
    <citation type="journal article" date="2019" name="Nat. Commun.">
        <title>The cell cycle-regulated DNA adenine methyltransferase CcrM opens a bubble at its DNA recognition site.</title>
        <authorList>
            <person name="Horton J.R."/>
            <person name="Woodcock C.B."/>
            <person name="Opot S.B."/>
            <person name="Reich N.O."/>
            <person name="Zhang X."/>
            <person name="Cheng X."/>
        </authorList>
    </citation>
    <scope>X-RAY CRYSTALLOGRAPHY (2.34 ANGSTROMS) IN COMPLEX WITH DNA</scope>
    <scope>FUNCTION</scope>
    <scope>REACTION MECHANISM</scope>
    <scope>SUBUNIT</scope>
    <scope>DOMAIN</scope>
    <scope>DNA-BINDING</scope>
    <source>
        <strain>ATCC 19089 / CIP 103742 / CB 15</strain>
    </source>
</reference>
<organism>
    <name type="scientific">Caulobacter vibrioides (strain ATCC 19089 / CIP 103742 / CB 15)</name>
    <name type="common">Caulobacter crescentus</name>
    <dbReference type="NCBI Taxonomy" id="190650"/>
    <lineage>
        <taxon>Bacteria</taxon>
        <taxon>Pseudomonadati</taxon>
        <taxon>Pseudomonadota</taxon>
        <taxon>Alphaproteobacteria</taxon>
        <taxon>Caulobacterales</taxon>
        <taxon>Caulobacteraceae</taxon>
        <taxon>Caulobacter</taxon>
    </lineage>
</organism>
<dbReference type="EC" id="2.1.1.72"/>
<dbReference type="EMBL" id="AE005673">
    <property type="protein sequence ID" value="AAK22365.1"/>
    <property type="molecule type" value="Genomic_DNA"/>
</dbReference>
<dbReference type="PIR" id="A87296">
    <property type="entry name" value="A87296"/>
</dbReference>
<dbReference type="RefSeq" id="NP_419197.1">
    <property type="nucleotide sequence ID" value="NC_002696.2"/>
</dbReference>
<dbReference type="RefSeq" id="WP_010918266.1">
    <property type="nucleotide sequence ID" value="NC_002696.2"/>
</dbReference>
<dbReference type="PDB" id="6PBD">
    <property type="method" value="X-ray"/>
    <property type="resolution" value="2.34 A"/>
    <property type="chains" value="A/B=1-358"/>
</dbReference>
<dbReference type="PDBsum" id="6PBD"/>
<dbReference type="SMR" id="P0CAW2"/>
<dbReference type="STRING" id="190650.CC_0378"/>
<dbReference type="REBASE" id="2539">
    <property type="entry name" value="M.CcrMI"/>
</dbReference>
<dbReference type="EnsemblBacteria" id="AAK22365">
    <property type="protein sequence ID" value="AAK22365"/>
    <property type="gene ID" value="CC_0378"/>
</dbReference>
<dbReference type="KEGG" id="ccr:CC_0378"/>
<dbReference type="PATRIC" id="fig|190650.5.peg.380"/>
<dbReference type="eggNOG" id="COG2189">
    <property type="taxonomic scope" value="Bacteria"/>
</dbReference>
<dbReference type="HOGENOM" id="CLU_024927_5_1_5"/>
<dbReference type="BioCyc" id="CAULO:CC0378-MONOMER"/>
<dbReference type="BRENDA" id="2.1.1.72">
    <property type="organism ID" value="1218"/>
</dbReference>
<dbReference type="Proteomes" id="UP000001816">
    <property type="component" value="Chromosome"/>
</dbReference>
<dbReference type="GO" id="GO:0005737">
    <property type="term" value="C:cytoplasm"/>
    <property type="evidence" value="ECO:0007669"/>
    <property type="project" value="TreeGrafter"/>
</dbReference>
<dbReference type="GO" id="GO:0003677">
    <property type="term" value="F:DNA binding"/>
    <property type="evidence" value="ECO:0007669"/>
    <property type="project" value="UniProtKB-KW"/>
</dbReference>
<dbReference type="GO" id="GO:0008170">
    <property type="term" value="F:N-methyltransferase activity"/>
    <property type="evidence" value="ECO:0007669"/>
    <property type="project" value="InterPro"/>
</dbReference>
<dbReference type="GO" id="GO:0009007">
    <property type="term" value="F:site-specific DNA-methyltransferase (adenine-specific) activity"/>
    <property type="evidence" value="ECO:0007669"/>
    <property type="project" value="UniProtKB-EC"/>
</dbReference>
<dbReference type="GO" id="GO:0006260">
    <property type="term" value="P:DNA replication"/>
    <property type="evidence" value="ECO:0007669"/>
    <property type="project" value="UniProtKB-KW"/>
</dbReference>
<dbReference type="GO" id="GO:0032259">
    <property type="term" value="P:methylation"/>
    <property type="evidence" value="ECO:0007669"/>
    <property type="project" value="UniProtKB-KW"/>
</dbReference>
<dbReference type="FunFam" id="3.40.50.150:FF:000276">
    <property type="entry name" value="Methyltransferase"/>
    <property type="match status" value="1"/>
</dbReference>
<dbReference type="Gene3D" id="3.40.50.150">
    <property type="entry name" value="Vaccinia Virus protein VP39"/>
    <property type="match status" value="1"/>
</dbReference>
<dbReference type="InterPro" id="IPR002941">
    <property type="entry name" value="DNA_methylase_N4/N6"/>
</dbReference>
<dbReference type="InterPro" id="IPR002052">
    <property type="entry name" value="DNA_methylase_N6_adenine_CS"/>
</dbReference>
<dbReference type="InterPro" id="IPR040843">
    <property type="entry name" value="RAMA"/>
</dbReference>
<dbReference type="InterPro" id="IPR001091">
    <property type="entry name" value="RM_Methyltransferase"/>
</dbReference>
<dbReference type="InterPro" id="IPR029063">
    <property type="entry name" value="SAM-dependent_MTases_sf"/>
</dbReference>
<dbReference type="PANTHER" id="PTHR13370">
    <property type="entry name" value="RNA METHYLASE-RELATED"/>
    <property type="match status" value="1"/>
</dbReference>
<dbReference type="PANTHER" id="PTHR13370:SF3">
    <property type="entry name" value="TRNA (GUANINE(10)-N2)-METHYLTRANSFERASE HOMOLOG"/>
    <property type="match status" value="1"/>
</dbReference>
<dbReference type="Pfam" id="PF01555">
    <property type="entry name" value="N6_N4_Mtase"/>
    <property type="match status" value="1"/>
</dbReference>
<dbReference type="Pfam" id="PF18755">
    <property type="entry name" value="RAMA"/>
    <property type="match status" value="1"/>
</dbReference>
<dbReference type="PRINTS" id="PR00508">
    <property type="entry name" value="S21N4MTFRASE"/>
</dbReference>
<dbReference type="SUPFAM" id="SSF53335">
    <property type="entry name" value="S-adenosyl-L-methionine-dependent methyltransferases"/>
    <property type="match status" value="1"/>
</dbReference>
<dbReference type="PROSITE" id="PS00092">
    <property type="entry name" value="N6_MTASE"/>
    <property type="match status" value="1"/>
</dbReference>